<name>TAF1B_ARATH</name>
<comment type="function">
    <text evidence="5 7">TAFs are components of the transcription factor IID (TFIID) complex that is essential for mediating regulation of RNA polymerase transcription. Core scaffold of the TFIID complex. Acts as a histone acetyltransferase involved in the light regulation of growth and gene expression. Required for H3K9, H3K27, and H4K12 acetylation on the target promoters.</text>
</comment>
<comment type="subunit">
    <text>Component of the TFIID complex. TFIID is composed of TATA binding protein (TBP) and a number of TBP-associated factors (TAFs) whose MWs range from 14-217 kDa.</text>
</comment>
<comment type="subcellular location">
    <subcellularLocation>
        <location evidence="8">Nucleus</location>
    </subcellularLocation>
</comment>
<comment type="tissue specificity">
    <text evidence="5 6">Expressed in roots, shoots, leaves and inflorescences.</text>
</comment>
<comment type="disruption phenotype">
    <text evidence="6">Plants show reduced acetylation of histone H3 in light-responsive promoters, decreased chlorophyll accumulation and altered expression of about 9% of genes in young leaves.</text>
</comment>
<comment type="similarity">
    <text evidence="8">Belongs to the TAF1 family.</text>
</comment>
<comment type="sequence caution" evidence="8">
    <conflict type="erroneous gene model prediction">
        <sequence resource="EMBL-CDS" id="BAB01700"/>
    </conflict>
</comment>
<evidence type="ECO:0000255" key="1"/>
<evidence type="ECO:0000255" key="2">
    <source>
        <dbReference type="PROSITE-ProRule" id="PRU00035"/>
    </source>
</evidence>
<evidence type="ECO:0000255" key="3">
    <source>
        <dbReference type="PROSITE-ProRule" id="PRU00214"/>
    </source>
</evidence>
<evidence type="ECO:0000256" key="4">
    <source>
        <dbReference type="SAM" id="MobiDB-lite"/>
    </source>
</evidence>
<evidence type="ECO:0000269" key="5">
    <source>
    </source>
</evidence>
<evidence type="ECO:0000269" key="6">
    <source>
    </source>
</evidence>
<evidence type="ECO:0000269" key="7">
    <source>
    </source>
</evidence>
<evidence type="ECO:0000305" key="8"/>
<feature type="chain" id="PRO_0000269754" description="Transcription initiation factor TFIID subunit 1b">
    <location>
        <begin position="1"/>
        <end position="1786"/>
    </location>
</feature>
<feature type="domain" description="Ubiquitin-like" evidence="3">
    <location>
        <begin position="574"/>
        <end position="650"/>
    </location>
</feature>
<feature type="domain" description="Bromo" evidence="2">
    <location>
        <begin position="1656"/>
        <end position="1774"/>
    </location>
</feature>
<feature type="region of interest" description="Disordered" evidence="4">
    <location>
        <begin position="54"/>
        <end position="83"/>
    </location>
</feature>
<feature type="region of interest" description="Disordered" evidence="4">
    <location>
        <begin position="350"/>
        <end position="372"/>
    </location>
</feature>
<feature type="region of interest" description="Disordered" evidence="4">
    <location>
        <begin position="1303"/>
        <end position="1382"/>
    </location>
</feature>
<feature type="region of interest" description="Disordered" evidence="4">
    <location>
        <begin position="1397"/>
        <end position="1471"/>
    </location>
</feature>
<feature type="region of interest" description="Disordered" evidence="4">
    <location>
        <begin position="1596"/>
        <end position="1634"/>
    </location>
</feature>
<feature type="coiled-coil region" evidence="1">
    <location>
        <begin position="1591"/>
        <end position="1620"/>
    </location>
</feature>
<feature type="coiled-coil region" evidence="1">
    <location>
        <begin position="1752"/>
        <end position="1786"/>
    </location>
</feature>
<feature type="compositionally biased region" description="Basic and acidic residues" evidence="4">
    <location>
        <begin position="61"/>
        <end position="83"/>
    </location>
</feature>
<feature type="compositionally biased region" description="Polar residues" evidence="4">
    <location>
        <begin position="352"/>
        <end position="362"/>
    </location>
</feature>
<feature type="compositionally biased region" description="Basic residues" evidence="4">
    <location>
        <begin position="1303"/>
        <end position="1313"/>
    </location>
</feature>
<feature type="compositionally biased region" description="Polar residues" evidence="4">
    <location>
        <begin position="1357"/>
        <end position="1377"/>
    </location>
</feature>
<feature type="compositionally biased region" description="Basic residues" evidence="4">
    <location>
        <begin position="1397"/>
        <end position="1407"/>
    </location>
</feature>
<feature type="compositionally biased region" description="Polar residues" evidence="4">
    <location>
        <begin position="1433"/>
        <end position="1464"/>
    </location>
</feature>
<feature type="compositionally biased region" description="Basic residues" evidence="4">
    <location>
        <begin position="1604"/>
        <end position="1613"/>
    </location>
</feature>
<reference key="1">
    <citation type="journal article" date="2005" name="J. Biol. Chem.">
        <title>Arabidopsis HAF2 gene encoding TATA-binding protein (TBP)-associated factor TAF1, is required to integrate light signals to regulate gene expression and growth.</title>
        <authorList>
            <person name="Bertrand C."/>
            <person name="Benhamed M."/>
            <person name="Li Y.-F."/>
            <person name="Ayadi M."/>
            <person name="Lemonnier G."/>
            <person name="Renou J.-P."/>
            <person name="Delarue M."/>
            <person name="Zhou D.-X."/>
        </authorList>
    </citation>
    <scope>NUCLEOTIDE SEQUENCE [MRNA]</scope>
    <scope>TISSUE SPECIFICITY</scope>
    <scope>FUNCTION</scope>
    <source>
        <strain>cv. Wassilewskija</strain>
    </source>
</reference>
<reference key="2">
    <citation type="journal article" date="2004" name="Gene">
        <title>TBP-associated factors in Arabidopsis.</title>
        <authorList>
            <person name="Lago C."/>
            <person name="Clerici E."/>
            <person name="Mizzi L."/>
            <person name="Colombo L."/>
            <person name="Kater M.M."/>
        </authorList>
    </citation>
    <scope>NUCLEOTIDE SEQUENCE [MRNA]</scope>
    <scope>IDENTIFICATION</scope>
    <scope>NOMENCLATURE</scope>
    <scope>TISSUE SPECIFICITY</scope>
    <scope>DISRUPTION PHENOTYPE</scope>
</reference>
<reference key="3">
    <citation type="journal article" date="2000" name="DNA Res.">
        <title>Structural analysis of Arabidopsis thaliana chromosome 3. II. Sequence features of the 4,251,695 bp regions covered by 90 P1, TAC and BAC clones.</title>
        <authorList>
            <person name="Kaneko T."/>
            <person name="Katoh T."/>
            <person name="Sato S."/>
            <person name="Nakamura Y."/>
            <person name="Asamizu E."/>
            <person name="Tabata S."/>
        </authorList>
    </citation>
    <scope>NUCLEOTIDE SEQUENCE [LARGE SCALE GENOMIC DNA]</scope>
    <source>
        <strain>cv. Columbia</strain>
    </source>
</reference>
<reference key="4">
    <citation type="journal article" date="2017" name="Plant J.">
        <title>Araport11: a complete reannotation of the Arabidopsis thaliana reference genome.</title>
        <authorList>
            <person name="Cheng C.Y."/>
            <person name="Krishnakumar V."/>
            <person name="Chan A.P."/>
            <person name="Thibaud-Nissen F."/>
            <person name="Schobel S."/>
            <person name="Town C.D."/>
        </authorList>
    </citation>
    <scope>GENOME REANNOTATION</scope>
    <source>
        <strain>cv. Columbia</strain>
    </source>
</reference>
<reference key="5">
    <citation type="journal article" date="2002" name="Nucleic Acids Res.">
        <title>Analysis of histone acetyltransferase and histone deacetylase families of Arabidopsis thaliana suggests functional diversification of chromatin modification among multicellular eukaryotes.</title>
        <authorList>
            <person name="Pandey R."/>
            <person name="Mueller A."/>
            <person name="Napoli C.A."/>
            <person name="Selinger D.A."/>
            <person name="Pikaard C.S."/>
            <person name="Richards E.J."/>
            <person name="Bender J."/>
            <person name="Mount D.W."/>
            <person name="Jorgensen R.A."/>
        </authorList>
    </citation>
    <scope>IDENTIFICATION</scope>
    <scope>NOMENCLATURE</scope>
</reference>
<reference key="6">
    <citation type="journal article" date="2006" name="Plant Cell">
        <title>Arabidopsis GCN5, HD1, and TAF1/HAF2 interact to regulate histone acetylation required for light-responsive gene expression.</title>
        <authorList>
            <person name="Benhamed M."/>
            <person name="Bertrand C."/>
            <person name="Servet C."/>
            <person name="Zhou D.X."/>
        </authorList>
    </citation>
    <scope>FUNCTION</scope>
</reference>
<organism>
    <name type="scientific">Arabidopsis thaliana</name>
    <name type="common">Mouse-ear cress</name>
    <dbReference type="NCBI Taxonomy" id="3702"/>
    <lineage>
        <taxon>Eukaryota</taxon>
        <taxon>Viridiplantae</taxon>
        <taxon>Streptophyta</taxon>
        <taxon>Embryophyta</taxon>
        <taxon>Tracheophyta</taxon>
        <taxon>Spermatophyta</taxon>
        <taxon>Magnoliopsida</taxon>
        <taxon>eudicotyledons</taxon>
        <taxon>Gunneridae</taxon>
        <taxon>Pentapetalae</taxon>
        <taxon>rosids</taxon>
        <taxon>malvids</taxon>
        <taxon>Brassicales</taxon>
        <taxon>Brassicaceae</taxon>
        <taxon>Camelineae</taxon>
        <taxon>Arabidopsis</taxon>
    </lineage>
</organism>
<protein>
    <recommendedName>
        <fullName>Transcription initiation factor TFIID subunit 1b</fullName>
    </recommendedName>
    <alternativeName>
        <fullName>TAFII250-B</fullName>
    </alternativeName>
    <alternativeName>
        <fullName>TBP-associated factor 1b</fullName>
        <shortName>AtTAF1b</shortName>
    </alternativeName>
    <alternativeName>
        <fullName>Transcription initiation factor TFIID subunit 1-B</fullName>
    </alternativeName>
</protein>
<sequence>MICRVDYGSNDEEYDGPELQVVTEEDHLLPKREYLSAAFALSGLNSRASVFDDEDYDEQGGQEKEHVPVEKSFDSEEREPVVLKEEKPVKHEKEASILGNKNQMDTGDVQEELVVGLSEATLDEKRVTPLPTLYLEDDGMVILQFSEIFAIQEPQKKRQKREIRCITYRDKYISMDISELIEDDEEVLLKSHGRIDTHGKKTDQIQLDVPLPIRERSQLVKSGIVRDTTSESREFTKLGRDSCIMGELLKQDLKDDNSSLCQSQLTMEVFPLDQQEWEHLILWEISPQFSANCCEGFKSGLESAGIMVQVRASNSVTEQESLNVMNSGGQTQGDNNNMLEPFFVNPLESFGSRGSQSTNESTNKSRHHPQLLRLESQWDEDHYRENGDAGRENLKQLNSDARGRLSGLALQDRDMWDESWLDSIIWESDKDLSRSKLIFDLQDEQMIFEVPNNKERKYLQLHAGSRIVSRSSKSKDGSFQEGCGSNSGWQFNISNDKFYMNGKSAQKLQGNAKKSTVHSLRVFHSAPAIKLQTMKIKLSNKERANFHRPKALWYPHDNELAIKQQKILPTQGSMTIVVKSLGGKGSLLTVGREESVSSLKAKASRKLDFKETEAVKMFYMGKELEDEKSLAEQNVQPNSLVHLLRTKVHLWPWAQKLPGENKSLRPPGAFKKKSDLSNQDGHVFLMEYCEERPLMLSNAGMGANLCTYYQKSSPEDQHGNLLRNQSDTLGSVIILEHGNKSPFLGEVHGGCSQSSVETNMYKAPVFPHRLQSTDYLLVRSAKGKLSLRRINKIVAVGQQEPRMEIMSPASKNLHAYLVNRMMAYVYREFKHRDRIAADELSFSFSNISDATVRKYMQVCSDLERDANGKACWSKKRKFDKIPLGLNTLVAPEDVCSYESMLAGLFRLKHLGITRFTLPASISTALAQLPDERIAAASHIARELQITPWNLSSSFVTCATQGRENIERLEITGVGDPSGRGLGFSYVRVAPKSSAASEHKKKKAAACRGVPTVTGTDADPRRLSMEAAREVLLKFNVPDEIIAKQTQRHRTAMIRKISSEQAASGGKVGPTTVGMFSRSQRMSFLQLQQQAREMCHEIWDRQRLSLSACDDDGNESENEANSDLDSFVGDLEDLLDAEDGGEGEESNKSMNEKLDGVKGLKMRRWPSQVEKDEEIEDEAAEYVELCRLLMQDENDKKKKKLKDVGEGIGSFPPPRSNFEPFIDKKYIATEPDASFLIVNESTVKHTKNVDKATSKSPKDKQVKEIGTPICQMKKILKENQKVFMGKKTARANFVCGACGQHGHMKTNKHCPKYRRNTESQPESMDMKKSTGKPSSSDLSGEVWLTPIDNKKPAPKSATKISVNEATKVGDSTSKTPGSSDVAAVSEIDSGTKLTSRKLKISSKAKPKASKVESDSPFHSLMPAYSRERGESELHNPSVSGQLLPSTETDQAASSRYTTSVPQPSLSIDKDQAESCRPHRVIWPPTGKEHSQKKLVIKRLKEITDHDSGSLEETPQFESRKTKRMAELADFQRQQRLRLSENFLDWGPKDDRKWRKEQDISTELHREGKVRRAYDDSTVSEERSEIAESRRYREVIRSEREEEKRRKAKQKKKLQRGILENYPPRRNDGISSESGQNINSLCVSDFERNRTEYAPQPKRRKKGQVGLANILESIVDTLRVKEVNVSYLFLKPVTKKEAPNYLEIVKCPMDLSTIRDKVRRMEYRDRQQFRHDVWQIKFNAHLYNDGRNLSIPPLADELLVKCDRLLDEYRDELKEAEKGIVDSSDSLR</sequence>
<accession>Q6PUA2</accession>
<accession>Q9LJ62</accession>
<proteinExistence type="evidence at transcript level"/>
<keyword id="KW-0010">Activator</keyword>
<keyword id="KW-0103">Bromodomain</keyword>
<keyword id="KW-0156">Chromatin regulator</keyword>
<keyword id="KW-0175">Coiled coil</keyword>
<keyword id="KW-0539">Nucleus</keyword>
<keyword id="KW-1185">Reference proteome</keyword>
<keyword id="KW-0804">Transcription</keyword>
<keyword id="KW-0805">Transcription regulation</keyword>
<dbReference type="EMBL" id="AY579213">
    <property type="protein sequence ID" value="AAS90944.1"/>
    <property type="molecule type" value="mRNA"/>
</dbReference>
<dbReference type="EMBL" id="AP000735">
    <property type="protein sequence ID" value="BAB01700.1"/>
    <property type="status" value="ALT_SEQ"/>
    <property type="molecule type" value="Genomic_DNA"/>
</dbReference>
<dbReference type="EMBL" id="CP002686">
    <property type="protein sequence ID" value="AEE76187.1"/>
    <property type="molecule type" value="Genomic_DNA"/>
</dbReference>
<dbReference type="RefSeq" id="NP_188534.2">
    <property type="nucleotide sequence ID" value="NM_112790.3"/>
</dbReference>
<dbReference type="SMR" id="Q6PUA2"/>
<dbReference type="FunCoup" id="Q6PUA2">
    <property type="interactions" value="2741"/>
</dbReference>
<dbReference type="STRING" id="3702.Q6PUA2"/>
<dbReference type="GlyGen" id="Q6PUA2">
    <property type="glycosylation" value="1 site"/>
</dbReference>
<dbReference type="iPTMnet" id="Q6PUA2"/>
<dbReference type="PaxDb" id="3702-AT3G19040.1"/>
<dbReference type="EnsemblPlants" id="AT3G19040.1">
    <property type="protein sequence ID" value="AT3G19040.1"/>
    <property type="gene ID" value="AT3G19040"/>
</dbReference>
<dbReference type="GeneID" id="821437"/>
<dbReference type="Gramene" id="AT3G19040.1">
    <property type="protein sequence ID" value="AT3G19040.1"/>
    <property type="gene ID" value="AT3G19040"/>
</dbReference>
<dbReference type="KEGG" id="ath:AT3G19040"/>
<dbReference type="Araport" id="AT3G19040"/>
<dbReference type="TAIR" id="AT3G19040">
    <property type="gene designation" value="HAF2"/>
</dbReference>
<dbReference type="eggNOG" id="KOG0008">
    <property type="taxonomic scope" value="Eukaryota"/>
</dbReference>
<dbReference type="HOGENOM" id="CLU_236945_0_0_1"/>
<dbReference type="InParanoid" id="Q6PUA2"/>
<dbReference type="OMA" id="YMSFHIL"/>
<dbReference type="PhylomeDB" id="Q6PUA2"/>
<dbReference type="PRO" id="PR:Q6PUA2"/>
<dbReference type="Proteomes" id="UP000006548">
    <property type="component" value="Chromosome 3"/>
</dbReference>
<dbReference type="ExpressionAtlas" id="Q6PUA2">
    <property type="expression patterns" value="baseline and differential"/>
</dbReference>
<dbReference type="GO" id="GO:0005669">
    <property type="term" value="C:transcription factor TFIID complex"/>
    <property type="evidence" value="ECO:0007669"/>
    <property type="project" value="InterPro"/>
</dbReference>
<dbReference type="GO" id="GO:0004402">
    <property type="term" value="F:histone acetyltransferase activity"/>
    <property type="evidence" value="ECO:0007669"/>
    <property type="project" value="InterPro"/>
</dbReference>
<dbReference type="GO" id="GO:0016251">
    <property type="term" value="F:RNA polymerase II general transcription initiation factor activity"/>
    <property type="evidence" value="ECO:0007669"/>
    <property type="project" value="InterPro"/>
</dbReference>
<dbReference type="GO" id="GO:0017025">
    <property type="term" value="F:TBP-class protein binding"/>
    <property type="evidence" value="ECO:0007669"/>
    <property type="project" value="InterPro"/>
</dbReference>
<dbReference type="GO" id="GO:0009416">
    <property type="term" value="P:response to light stimulus"/>
    <property type="evidence" value="ECO:0000270"/>
    <property type="project" value="TAIR"/>
</dbReference>
<dbReference type="CDD" id="cd17064">
    <property type="entry name" value="Ubl_TAFs_like"/>
    <property type="match status" value="1"/>
</dbReference>
<dbReference type="FunFam" id="1.20.920.10:FF:000043">
    <property type="entry name" value="Transcription initiation factor TFIID subunit 1"/>
    <property type="match status" value="1"/>
</dbReference>
<dbReference type="FunFam" id="3.10.20.90:FF:000223">
    <property type="entry name" value="Transcription initiation factor TFIID subunit 1"/>
    <property type="match status" value="1"/>
</dbReference>
<dbReference type="Gene3D" id="1.20.920.10">
    <property type="entry name" value="Bromodomain-like"/>
    <property type="match status" value="1"/>
</dbReference>
<dbReference type="Gene3D" id="3.10.20.90">
    <property type="entry name" value="Phosphatidylinositol 3-kinase Catalytic Subunit, Chain A, domain 1"/>
    <property type="match status" value="1"/>
</dbReference>
<dbReference type="InterPro" id="IPR001487">
    <property type="entry name" value="Bromodomain"/>
</dbReference>
<dbReference type="InterPro" id="IPR036427">
    <property type="entry name" value="Bromodomain-like_sf"/>
</dbReference>
<dbReference type="InterPro" id="IPR018359">
    <property type="entry name" value="Bromodomain_CS"/>
</dbReference>
<dbReference type="InterPro" id="IPR040240">
    <property type="entry name" value="TAF1"/>
</dbReference>
<dbReference type="InterPro" id="IPR022591">
    <property type="entry name" value="TAF1_HAT_dom"/>
</dbReference>
<dbReference type="InterPro" id="IPR000626">
    <property type="entry name" value="Ubiquitin-like_dom"/>
</dbReference>
<dbReference type="InterPro" id="IPR029071">
    <property type="entry name" value="Ubiquitin-like_domsf"/>
</dbReference>
<dbReference type="PANTHER" id="PTHR13900">
    <property type="entry name" value="TRANSCRIPTION INITIATION FACTOR TFIID"/>
    <property type="match status" value="1"/>
</dbReference>
<dbReference type="PANTHER" id="PTHR13900:SF0">
    <property type="entry name" value="TRANSCRIPTION INITIATION FACTOR TFIID SUBUNIT 1"/>
    <property type="match status" value="1"/>
</dbReference>
<dbReference type="Pfam" id="PF00439">
    <property type="entry name" value="Bromodomain"/>
    <property type="match status" value="1"/>
</dbReference>
<dbReference type="Pfam" id="PF12157">
    <property type="entry name" value="DUF3591"/>
    <property type="match status" value="1"/>
</dbReference>
<dbReference type="Pfam" id="PF00240">
    <property type="entry name" value="ubiquitin"/>
    <property type="match status" value="1"/>
</dbReference>
<dbReference type="PRINTS" id="PR00503">
    <property type="entry name" value="BROMODOMAIN"/>
</dbReference>
<dbReference type="SMART" id="SM00297">
    <property type="entry name" value="BROMO"/>
    <property type="match status" value="1"/>
</dbReference>
<dbReference type="SMART" id="SM00213">
    <property type="entry name" value="UBQ"/>
    <property type="match status" value="1"/>
</dbReference>
<dbReference type="SUPFAM" id="SSF47370">
    <property type="entry name" value="Bromodomain"/>
    <property type="match status" value="1"/>
</dbReference>
<dbReference type="SUPFAM" id="SSF54236">
    <property type="entry name" value="Ubiquitin-like"/>
    <property type="match status" value="1"/>
</dbReference>
<dbReference type="PROSITE" id="PS00633">
    <property type="entry name" value="BROMODOMAIN_1"/>
    <property type="match status" value="1"/>
</dbReference>
<dbReference type="PROSITE" id="PS50014">
    <property type="entry name" value="BROMODOMAIN_2"/>
    <property type="match status" value="1"/>
</dbReference>
<dbReference type="PROSITE" id="PS50053">
    <property type="entry name" value="UBIQUITIN_2"/>
    <property type="match status" value="1"/>
</dbReference>
<gene>
    <name type="primary">TAF1B</name>
    <name type="synonym">HAF2</name>
    <name type="ordered locus">At3g19040</name>
    <name type="ORF">K13E13.15</name>
    <name type="ORF">K13E13_16</name>
</gene>